<name>MTRH_METTM</name>
<feature type="chain" id="PRO_0000147568" description="Tetrahydromethanopterin S-methyltransferase subunit H">
    <location>
        <begin position="1"/>
        <end position="310"/>
    </location>
</feature>
<organism>
    <name type="scientific">Methanothermobacter marburgensis (strain ATCC BAA-927 / DSM 2133 / JCM 14651 / NBRC 100331 / OCM 82 / Marburg)</name>
    <name type="common">Methanobacterium thermoautotrophicum</name>
    <dbReference type="NCBI Taxonomy" id="79929"/>
    <lineage>
        <taxon>Archaea</taxon>
        <taxon>Methanobacteriati</taxon>
        <taxon>Methanobacteriota</taxon>
        <taxon>Methanomada group</taxon>
        <taxon>Methanobacteria</taxon>
        <taxon>Methanobacteriales</taxon>
        <taxon>Methanobacteriaceae</taxon>
        <taxon>Methanothermobacter</taxon>
    </lineage>
</organism>
<comment type="function">
    <text evidence="1 3">Part of a complex that catalyzes the formation of methyl-coenzyme M and tetrahydromethanopterin from coenzyme M and methyl-tetrahydromethanopterin. This is an energy-conserving, sodium-ion translocating step. MtrH catalyzes the transfer of the methyl group from methyl-tetrahydromethanopterin to the corrinoid prosthetic group of MtrA.</text>
</comment>
<comment type="catalytic activity">
    <reaction evidence="3">
        <text>5-methyl-5,6,7,8-tetrahydromethanopterin + coenzyme M + 2 Na(+)(in) = 5,6,7,8-tetrahydromethanopterin + methyl-coenzyme M + 2 Na(+)(out)</text>
        <dbReference type="Rhea" id="RHEA:53492"/>
        <dbReference type="ChEBI" id="CHEBI:29101"/>
        <dbReference type="ChEBI" id="CHEBI:58103"/>
        <dbReference type="ChEBI" id="CHEBI:58116"/>
        <dbReference type="ChEBI" id="CHEBI:58286"/>
        <dbReference type="ChEBI" id="CHEBI:58319"/>
        <dbReference type="EC" id="7.2.1.4"/>
    </reaction>
</comment>
<comment type="biophysicochemical properties">
    <kinetics>
        <KM evidence="3">260 uM for 5-methyl-5,6,7,8-tetrahydromethanopterin</KM>
        <KM evidence="3">60 uM for coenzyme M</KM>
        <Vmax evidence="3">11.6 umol/min/mg enzyme</Vmax>
        <text evidence="3">From other experiments a much lower Km for 5-methyl-5,6,7,8-tetrahydromethanopterin is estimated.</text>
    </kinetics>
</comment>
<comment type="pathway">
    <text>One-carbon metabolism; methanogenesis from CO(2); methyl-coenzyme M from 5,10-methylene-5,6,7,8-tetrahydromethanopterin: step 2/2.</text>
</comment>
<comment type="subunit">
    <text evidence="2">The complex is composed of 8 subunits; MtrA, MtrB, MtrC, MtrD, MtrE, MtrF, MtrG and MtrH.</text>
</comment>
<comment type="induction">
    <text evidence="5">The last gene of the probable mtrEDCBAFGH operon.</text>
</comment>
<comment type="similarity">
    <text evidence="4">Belongs to the MtrH family.</text>
</comment>
<evidence type="ECO:0000269" key="1">
    <source>
    </source>
</evidence>
<evidence type="ECO:0000269" key="2">
    <source>
    </source>
</evidence>
<evidence type="ECO:0000269" key="3">
    <source>
    </source>
</evidence>
<evidence type="ECO:0000305" key="4"/>
<evidence type="ECO:0000305" key="5">
    <source>
    </source>
</evidence>
<reference key="1">
    <citation type="journal article" date="1995" name="Eur. J. Biochem.">
        <title>The energy conserving N5-methyltetrahydromethanopterin:coenzyme M methyltransferase complex from Methanobacterium thermoautotrophicum is composed of eight different subunits.</title>
        <authorList>
            <person name="Harms U."/>
            <person name="Weiss D.S."/>
            <person name="Gaertner P."/>
            <person name="Linder D."/>
            <person name="Thauer R.K."/>
        </authorList>
    </citation>
    <scope>NUCLEOTIDE SEQUENCE [GENOMIC DNA]</scope>
    <scope>PARTIAL PROTEIN SEQUENCE</scope>
    <scope>SUBUNIT</scope>
    <scope>OPERON STRUCTURE</scope>
    <source>
        <strain>ATCC BAA-927 / DSM 2133 / JCM 14651 / NBRC 100331 / OCM 82 / Marburg</strain>
    </source>
</reference>
<reference key="2">
    <citation type="journal article" date="2010" name="J. Bacteriol.">
        <title>Complete genome sequence of Methanothermobacter marburgensis, a methanoarchaeon model organism.</title>
        <authorList>
            <person name="Liesegang H."/>
            <person name="Kaster A.K."/>
            <person name="Wiezer A."/>
            <person name="Goenrich M."/>
            <person name="Wollherr A."/>
            <person name="Seedorf H."/>
            <person name="Gottschalk G."/>
            <person name="Thauer R.K."/>
        </authorList>
    </citation>
    <scope>NUCLEOTIDE SEQUENCE [LARGE SCALE GENOMIC DNA]</scope>
    <source>
        <strain>ATCC BAA-927 / DSM 2133 / JCM 14651 / NBRC 100331 / OCM 82 / Marburg</strain>
    </source>
</reference>
<reference key="3">
    <citation type="journal article" date="1993" name="Eur. J. Biochem.">
        <title>Purification and properties of N5-methyltetrahydromethanopterin:coenzyme M methyltransferase from Methanobacterium thermoautotrophicum.</title>
        <authorList>
            <person name="Gaertner P."/>
            <person name="Ecker A."/>
            <person name="Fischer R."/>
            <person name="Linder D."/>
            <person name="Fuchs G."/>
            <person name="Thauer R.K."/>
        </authorList>
    </citation>
    <scope>PROTEIN SEQUENCE OF 1-30</scope>
    <scope>FUNCTION</scope>
    <scope>CATALYTIC ACTIVITY</scope>
    <scope>BIOPHYSICOCHEMICAL PROPERTIES</scope>
    <source>
        <strain>ATCC BAA-927 / DSM 2133 / JCM 14651 / NBRC 100331 / OCM 82 / Marburg</strain>
    </source>
</reference>
<reference key="4">
    <citation type="journal article" date="1999" name="FEBS Lett.">
        <title>The energy conserving methyltetrahydromethanopterin:coenzyme M methyltransferase complex from methanogenic archaea: function of the subunit MtrH.</title>
        <authorList>
            <person name="Hippler B."/>
            <person name="Thauer R.K."/>
        </authorList>
    </citation>
    <scope>FUNCTION</scope>
    <source>
        <strain>ATCC BAA-927 / DSM 2133 / JCM 14651 / NBRC 100331 / OCM 82 / Marburg</strain>
    </source>
</reference>
<gene>
    <name type="primary">mtrH</name>
    <name type="ordered locus">MTBMA_c15400</name>
</gene>
<sequence length="310" mass="33474">MFRFDKEQIVLDIAGTKIGGQPGEYPTVLAGTIFYGGHSIIEDEKAGVFDKDKAEALIKTQEEMSDVTGNPHIVQTFGQTPEAIVKYLEFVGDITDAPFFIDSTSGEARIAGAEYASEVGLEDRAIYNSVNMAADESELEALKNTKLSASIVLGFNPMDPTVEGKIGIWEDGAGTIDKGLLEMAADCGIDKYLMDVAVTPLGQGAGVAVRTSFAVKSKWGYPVGSGIHNVPSAWDWLREYKKEHKEAWPVCDVGSNLIQQMAGGDFVLYGPIENARMAFPACAMADIFISEAAKDIGTEAVEDHPFFKLL</sequence>
<proteinExistence type="evidence at protein level"/>
<dbReference type="EC" id="7.2.1.4" evidence="3"/>
<dbReference type="EMBL" id="X84219">
    <property type="protein sequence ID" value="CAA59003.1"/>
    <property type="molecule type" value="Genomic_DNA"/>
</dbReference>
<dbReference type="EMBL" id="CP001710">
    <property type="protein sequence ID" value="ADL59119.1"/>
    <property type="molecule type" value="Genomic_DNA"/>
</dbReference>
<dbReference type="RefSeq" id="WP_013296329.1">
    <property type="nucleotide sequence ID" value="NC_014408.1"/>
</dbReference>
<dbReference type="SMR" id="P80187"/>
<dbReference type="STRING" id="79929.MTBMA_c15400"/>
<dbReference type="TCDB" id="3.C.1.1.1">
    <property type="family name" value="the na(+) transporting methyltetrahydromethanopterin:coenzyme m methyltransferase (nat-mmm) family"/>
</dbReference>
<dbReference type="PaxDb" id="79929-MTBMA_c15400"/>
<dbReference type="GeneID" id="77400311"/>
<dbReference type="GeneID" id="9705249"/>
<dbReference type="KEGG" id="mmg:MTBMA_c15400"/>
<dbReference type="PATRIC" id="fig|79929.8.peg.1493"/>
<dbReference type="HOGENOM" id="CLU_048697_0_0_2"/>
<dbReference type="OrthoDB" id="18811at2157"/>
<dbReference type="UniPathway" id="UPA00640">
    <property type="reaction ID" value="UER00698"/>
</dbReference>
<dbReference type="Proteomes" id="UP000000345">
    <property type="component" value="Chromosome"/>
</dbReference>
<dbReference type="GO" id="GO:0034708">
    <property type="term" value="C:methyltransferase complex"/>
    <property type="evidence" value="ECO:0000314"/>
    <property type="project" value="UniProtKB"/>
</dbReference>
<dbReference type="GO" id="GO:0030269">
    <property type="term" value="F:tetrahydromethanopterin S-methyltransferase activity"/>
    <property type="evidence" value="ECO:0007669"/>
    <property type="project" value="UniProtKB-UniRule"/>
</dbReference>
<dbReference type="GO" id="GO:0019386">
    <property type="term" value="P:methanogenesis, from carbon dioxide"/>
    <property type="evidence" value="ECO:0007669"/>
    <property type="project" value="UniProtKB-UniRule"/>
</dbReference>
<dbReference type="GO" id="GO:0032259">
    <property type="term" value="P:methylation"/>
    <property type="evidence" value="ECO:0007669"/>
    <property type="project" value="UniProtKB-KW"/>
</dbReference>
<dbReference type="GO" id="GO:0006730">
    <property type="term" value="P:one-carbon metabolic process"/>
    <property type="evidence" value="ECO:0007669"/>
    <property type="project" value="UniProtKB-UniRule"/>
</dbReference>
<dbReference type="Gene3D" id="3.20.20.20">
    <property type="entry name" value="Dihydropteroate synthase-like"/>
    <property type="match status" value="1"/>
</dbReference>
<dbReference type="HAMAP" id="MF_01501">
    <property type="entry name" value="MtrH"/>
    <property type="match status" value="1"/>
</dbReference>
<dbReference type="InterPro" id="IPR011005">
    <property type="entry name" value="Dihydropteroate_synth-like_sf"/>
</dbReference>
<dbReference type="InterPro" id="IPR023467">
    <property type="entry name" value="MeTrfase_MtrH/MtxH"/>
</dbReference>
<dbReference type="InterPro" id="IPR028342">
    <property type="entry name" value="MtrH"/>
</dbReference>
<dbReference type="NCBIfam" id="TIGR01114">
    <property type="entry name" value="mtrH"/>
    <property type="match status" value="1"/>
</dbReference>
<dbReference type="NCBIfam" id="NF002142">
    <property type="entry name" value="PRK00979.1-1"/>
    <property type="match status" value="1"/>
</dbReference>
<dbReference type="Pfam" id="PF02007">
    <property type="entry name" value="MtrH"/>
    <property type="match status" value="1"/>
</dbReference>
<dbReference type="PIRSF" id="PIRSF500206">
    <property type="entry name" value="MtrH"/>
    <property type="match status" value="1"/>
</dbReference>
<dbReference type="PIRSF" id="PIRSF004960">
    <property type="entry name" value="MtrH_MtxH"/>
    <property type="match status" value="1"/>
</dbReference>
<dbReference type="SUPFAM" id="SSF51717">
    <property type="entry name" value="Dihydropteroate synthetase-like"/>
    <property type="match status" value="1"/>
</dbReference>
<accession>P80187</accession>
<accession>D9PY21</accession>
<accession>Q50775</accession>
<keyword id="KW-0903">Direct protein sequencing</keyword>
<keyword id="KW-0484">Methanogenesis</keyword>
<keyword id="KW-0489">Methyltransferase</keyword>
<keyword id="KW-0554">One-carbon metabolism</keyword>
<keyword id="KW-0808">Transferase</keyword>
<keyword id="KW-1278">Translocase</keyword>
<protein>
    <recommendedName>
        <fullName>Tetrahydromethanopterin S-methyltransferase subunit H</fullName>
        <ecNumber evidence="3">7.2.1.4</ecNumber>
    </recommendedName>
    <alternativeName>
        <fullName>N5-methyltetrahydromethanopterin--coenzyme M methyltransferase subunit H</fullName>
    </alternativeName>
</protein>